<dbReference type="EC" id="6.3.4.2" evidence="1"/>
<dbReference type="EMBL" id="CP000159">
    <property type="protein sequence ID" value="ABC46199.1"/>
    <property type="molecule type" value="Genomic_DNA"/>
</dbReference>
<dbReference type="RefSeq" id="WP_011403326.1">
    <property type="nucleotide sequence ID" value="NC_007677.1"/>
</dbReference>
<dbReference type="RefSeq" id="YP_444693.1">
    <property type="nucleotide sequence ID" value="NC_007677.1"/>
</dbReference>
<dbReference type="SMR" id="Q2S538"/>
<dbReference type="STRING" id="309807.SRU_0550"/>
<dbReference type="MEROPS" id="C26.964"/>
<dbReference type="EnsemblBacteria" id="ABC46199">
    <property type="protein sequence ID" value="ABC46199"/>
    <property type="gene ID" value="SRU_0550"/>
</dbReference>
<dbReference type="KEGG" id="sru:SRU_0550"/>
<dbReference type="PATRIC" id="fig|309807.25.peg.572"/>
<dbReference type="eggNOG" id="COG0504">
    <property type="taxonomic scope" value="Bacteria"/>
</dbReference>
<dbReference type="HOGENOM" id="CLU_011675_5_0_10"/>
<dbReference type="OrthoDB" id="9801107at2"/>
<dbReference type="UniPathway" id="UPA00159">
    <property type="reaction ID" value="UER00277"/>
</dbReference>
<dbReference type="Proteomes" id="UP000008674">
    <property type="component" value="Chromosome"/>
</dbReference>
<dbReference type="GO" id="GO:0005829">
    <property type="term" value="C:cytosol"/>
    <property type="evidence" value="ECO:0007669"/>
    <property type="project" value="TreeGrafter"/>
</dbReference>
<dbReference type="GO" id="GO:0005524">
    <property type="term" value="F:ATP binding"/>
    <property type="evidence" value="ECO:0007669"/>
    <property type="project" value="UniProtKB-KW"/>
</dbReference>
<dbReference type="GO" id="GO:0003883">
    <property type="term" value="F:CTP synthase activity"/>
    <property type="evidence" value="ECO:0007669"/>
    <property type="project" value="UniProtKB-UniRule"/>
</dbReference>
<dbReference type="GO" id="GO:0004359">
    <property type="term" value="F:glutaminase activity"/>
    <property type="evidence" value="ECO:0007669"/>
    <property type="project" value="RHEA"/>
</dbReference>
<dbReference type="GO" id="GO:0042802">
    <property type="term" value="F:identical protein binding"/>
    <property type="evidence" value="ECO:0007669"/>
    <property type="project" value="TreeGrafter"/>
</dbReference>
<dbReference type="GO" id="GO:0046872">
    <property type="term" value="F:metal ion binding"/>
    <property type="evidence" value="ECO:0007669"/>
    <property type="project" value="UniProtKB-KW"/>
</dbReference>
<dbReference type="GO" id="GO:0044210">
    <property type="term" value="P:'de novo' CTP biosynthetic process"/>
    <property type="evidence" value="ECO:0007669"/>
    <property type="project" value="UniProtKB-UniRule"/>
</dbReference>
<dbReference type="GO" id="GO:0019856">
    <property type="term" value="P:pyrimidine nucleobase biosynthetic process"/>
    <property type="evidence" value="ECO:0007669"/>
    <property type="project" value="TreeGrafter"/>
</dbReference>
<dbReference type="CDD" id="cd03113">
    <property type="entry name" value="CTPS_N"/>
    <property type="match status" value="1"/>
</dbReference>
<dbReference type="CDD" id="cd01746">
    <property type="entry name" value="GATase1_CTP_Synthase"/>
    <property type="match status" value="1"/>
</dbReference>
<dbReference type="FunFam" id="3.40.50.300:FF:000009">
    <property type="entry name" value="CTP synthase"/>
    <property type="match status" value="1"/>
</dbReference>
<dbReference type="FunFam" id="3.40.50.880:FF:000002">
    <property type="entry name" value="CTP synthase"/>
    <property type="match status" value="1"/>
</dbReference>
<dbReference type="Gene3D" id="3.40.50.880">
    <property type="match status" value="1"/>
</dbReference>
<dbReference type="Gene3D" id="3.40.50.300">
    <property type="entry name" value="P-loop containing nucleotide triphosphate hydrolases"/>
    <property type="match status" value="1"/>
</dbReference>
<dbReference type="HAMAP" id="MF_01227">
    <property type="entry name" value="PyrG"/>
    <property type="match status" value="1"/>
</dbReference>
<dbReference type="InterPro" id="IPR029062">
    <property type="entry name" value="Class_I_gatase-like"/>
</dbReference>
<dbReference type="InterPro" id="IPR004468">
    <property type="entry name" value="CTP_synthase"/>
</dbReference>
<dbReference type="InterPro" id="IPR017456">
    <property type="entry name" value="CTP_synthase_N"/>
</dbReference>
<dbReference type="InterPro" id="IPR017926">
    <property type="entry name" value="GATASE"/>
</dbReference>
<dbReference type="InterPro" id="IPR033828">
    <property type="entry name" value="GATase1_CTP_Synthase"/>
</dbReference>
<dbReference type="InterPro" id="IPR027417">
    <property type="entry name" value="P-loop_NTPase"/>
</dbReference>
<dbReference type="NCBIfam" id="NF003792">
    <property type="entry name" value="PRK05380.1"/>
    <property type="match status" value="1"/>
</dbReference>
<dbReference type="NCBIfam" id="TIGR00337">
    <property type="entry name" value="PyrG"/>
    <property type="match status" value="1"/>
</dbReference>
<dbReference type="PANTHER" id="PTHR11550">
    <property type="entry name" value="CTP SYNTHASE"/>
    <property type="match status" value="1"/>
</dbReference>
<dbReference type="PANTHER" id="PTHR11550:SF0">
    <property type="entry name" value="CTP SYNTHASE-RELATED"/>
    <property type="match status" value="1"/>
</dbReference>
<dbReference type="Pfam" id="PF06418">
    <property type="entry name" value="CTP_synth_N"/>
    <property type="match status" value="1"/>
</dbReference>
<dbReference type="Pfam" id="PF00117">
    <property type="entry name" value="GATase"/>
    <property type="match status" value="1"/>
</dbReference>
<dbReference type="SUPFAM" id="SSF52317">
    <property type="entry name" value="Class I glutamine amidotransferase-like"/>
    <property type="match status" value="1"/>
</dbReference>
<dbReference type="SUPFAM" id="SSF52540">
    <property type="entry name" value="P-loop containing nucleoside triphosphate hydrolases"/>
    <property type="match status" value="1"/>
</dbReference>
<dbReference type="PROSITE" id="PS51273">
    <property type="entry name" value="GATASE_TYPE_1"/>
    <property type="match status" value="1"/>
</dbReference>
<feature type="chain" id="PRO_0000266209" description="CTP synthase">
    <location>
        <begin position="1"/>
        <end position="565"/>
    </location>
</feature>
<feature type="domain" description="Glutamine amidotransferase type-1" evidence="1">
    <location>
        <begin position="301"/>
        <end position="543"/>
    </location>
</feature>
<feature type="region of interest" description="Amidoligase domain" evidence="1">
    <location>
        <begin position="1"/>
        <end position="268"/>
    </location>
</feature>
<feature type="region of interest" description="Disordered" evidence="2">
    <location>
        <begin position="545"/>
        <end position="565"/>
    </location>
</feature>
<feature type="active site" description="Nucleophile; for glutamine hydrolysis" evidence="1">
    <location>
        <position position="390"/>
    </location>
</feature>
<feature type="active site" evidence="1">
    <location>
        <position position="516"/>
    </location>
</feature>
<feature type="active site" evidence="1">
    <location>
        <position position="518"/>
    </location>
</feature>
<feature type="binding site" evidence="1">
    <location>
        <position position="14"/>
    </location>
    <ligand>
        <name>CTP</name>
        <dbReference type="ChEBI" id="CHEBI:37563"/>
        <note>allosteric inhibitor</note>
    </ligand>
</feature>
<feature type="binding site" evidence="1">
    <location>
        <position position="14"/>
    </location>
    <ligand>
        <name>UTP</name>
        <dbReference type="ChEBI" id="CHEBI:46398"/>
    </ligand>
</feature>
<feature type="binding site" evidence="1">
    <location>
        <begin position="15"/>
        <end position="20"/>
    </location>
    <ligand>
        <name>ATP</name>
        <dbReference type="ChEBI" id="CHEBI:30616"/>
    </ligand>
</feature>
<feature type="binding site" evidence="1">
    <location>
        <position position="55"/>
    </location>
    <ligand>
        <name>L-glutamine</name>
        <dbReference type="ChEBI" id="CHEBI:58359"/>
    </ligand>
</feature>
<feature type="binding site" evidence="1">
    <location>
        <position position="72"/>
    </location>
    <ligand>
        <name>ATP</name>
        <dbReference type="ChEBI" id="CHEBI:30616"/>
    </ligand>
</feature>
<feature type="binding site" evidence="1">
    <location>
        <position position="72"/>
    </location>
    <ligand>
        <name>Mg(2+)</name>
        <dbReference type="ChEBI" id="CHEBI:18420"/>
    </ligand>
</feature>
<feature type="binding site" evidence="1">
    <location>
        <position position="142"/>
    </location>
    <ligand>
        <name>Mg(2+)</name>
        <dbReference type="ChEBI" id="CHEBI:18420"/>
    </ligand>
</feature>
<feature type="binding site" evidence="1">
    <location>
        <begin position="149"/>
        <end position="151"/>
    </location>
    <ligand>
        <name>CTP</name>
        <dbReference type="ChEBI" id="CHEBI:37563"/>
        <note>allosteric inhibitor</note>
    </ligand>
</feature>
<feature type="binding site" evidence="1">
    <location>
        <begin position="189"/>
        <end position="194"/>
    </location>
    <ligand>
        <name>CTP</name>
        <dbReference type="ChEBI" id="CHEBI:37563"/>
        <note>allosteric inhibitor</note>
    </ligand>
</feature>
<feature type="binding site" evidence="1">
    <location>
        <begin position="189"/>
        <end position="194"/>
    </location>
    <ligand>
        <name>UTP</name>
        <dbReference type="ChEBI" id="CHEBI:46398"/>
    </ligand>
</feature>
<feature type="binding site" evidence="1">
    <location>
        <position position="225"/>
    </location>
    <ligand>
        <name>CTP</name>
        <dbReference type="ChEBI" id="CHEBI:37563"/>
        <note>allosteric inhibitor</note>
    </ligand>
</feature>
<feature type="binding site" evidence="1">
    <location>
        <position position="225"/>
    </location>
    <ligand>
        <name>UTP</name>
        <dbReference type="ChEBI" id="CHEBI:46398"/>
    </ligand>
</feature>
<feature type="binding site" evidence="1">
    <location>
        <position position="363"/>
    </location>
    <ligand>
        <name>L-glutamine</name>
        <dbReference type="ChEBI" id="CHEBI:58359"/>
    </ligand>
</feature>
<feature type="binding site" evidence="1">
    <location>
        <begin position="391"/>
        <end position="394"/>
    </location>
    <ligand>
        <name>L-glutamine</name>
        <dbReference type="ChEBI" id="CHEBI:58359"/>
    </ligand>
</feature>
<feature type="binding site" evidence="1">
    <location>
        <position position="414"/>
    </location>
    <ligand>
        <name>L-glutamine</name>
        <dbReference type="ChEBI" id="CHEBI:58359"/>
    </ligand>
</feature>
<feature type="binding site" evidence="1">
    <location>
        <position position="471"/>
    </location>
    <ligand>
        <name>L-glutamine</name>
        <dbReference type="ChEBI" id="CHEBI:58359"/>
    </ligand>
</feature>
<keyword id="KW-0067">ATP-binding</keyword>
<keyword id="KW-0315">Glutamine amidotransferase</keyword>
<keyword id="KW-0436">Ligase</keyword>
<keyword id="KW-0460">Magnesium</keyword>
<keyword id="KW-0479">Metal-binding</keyword>
<keyword id="KW-0547">Nucleotide-binding</keyword>
<keyword id="KW-0665">Pyrimidine biosynthesis</keyword>
<keyword id="KW-1185">Reference proteome</keyword>
<protein>
    <recommendedName>
        <fullName evidence="1">CTP synthase</fullName>
        <ecNumber evidence="1">6.3.4.2</ecNumber>
    </recommendedName>
    <alternativeName>
        <fullName evidence="1">Cytidine 5'-triphosphate synthase</fullName>
    </alternativeName>
    <alternativeName>
        <fullName evidence="1">Cytidine triphosphate synthetase</fullName>
        <shortName evidence="1">CTP synthetase</shortName>
        <shortName evidence="1">CTPS</shortName>
    </alternativeName>
    <alternativeName>
        <fullName evidence="1">UTP--ammonia ligase</fullName>
    </alternativeName>
</protein>
<evidence type="ECO:0000255" key="1">
    <source>
        <dbReference type="HAMAP-Rule" id="MF_01227"/>
    </source>
</evidence>
<evidence type="ECO:0000256" key="2">
    <source>
        <dbReference type="SAM" id="MobiDB-lite"/>
    </source>
</evidence>
<accession>Q2S538</accession>
<reference key="1">
    <citation type="journal article" date="2005" name="Proc. Natl. Acad. Sci. U.S.A.">
        <title>The genome of Salinibacter ruber: convergence and gene exchange among hyperhalophilic bacteria and archaea.</title>
        <authorList>
            <person name="Mongodin E.F."/>
            <person name="Nelson K.E."/>
            <person name="Daugherty S."/>
            <person name="DeBoy R.T."/>
            <person name="Wister J."/>
            <person name="Khouri H."/>
            <person name="Weidman J."/>
            <person name="Walsh D.A."/>
            <person name="Papke R.T."/>
            <person name="Sanchez Perez G."/>
            <person name="Sharma A.K."/>
            <person name="Nesbo C.L."/>
            <person name="MacLeod D."/>
            <person name="Bapteste E."/>
            <person name="Doolittle W.F."/>
            <person name="Charlebois R.L."/>
            <person name="Legault B."/>
            <person name="Rodriguez-Valera F."/>
        </authorList>
    </citation>
    <scope>NUCLEOTIDE SEQUENCE [LARGE SCALE GENOMIC DNA]</scope>
    <source>
        <strain>DSM 13855 / CECT 5946 / M31</strain>
    </source>
</reference>
<gene>
    <name evidence="1" type="primary">pyrG</name>
    <name type="ordered locus">SRU_0550</name>
</gene>
<organism>
    <name type="scientific">Salinibacter ruber (strain DSM 13855 / M31)</name>
    <dbReference type="NCBI Taxonomy" id="309807"/>
    <lineage>
        <taxon>Bacteria</taxon>
        <taxon>Pseudomonadati</taxon>
        <taxon>Rhodothermota</taxon>
        <taxon>Rhodothermia</taxon>
        <taxon>Rhodothermales</taxon>
        <taxon>Salinibacteraceae</taxon>
        <taxon>Salinibacter</taxon>
    </lineage>
</organism>
<sequence length="565" mass="63430">MQTKYIFVTGGVTSSLGKGIFSASLGRLLSDRGLDVTIQKFDPYINVDPGTMNPYEHGEVYVTNDGAETDLDLGHYERFLDQPTSQANNVTTGRVYMEVISKEREGAYLGKTVQVVPHIIDEIKHWMLKLGETGDYDVVITEIGGTVGDIEGQPYLEAIRQLRNELGPRNTMIAHLTLIPHLRAAGELKTKPTQHSVKELLAHGLQPDTIVCRSERSITAEVRRKISLFCNVEEEAVIQMLDAESIYEVPLLLRDEGTGELVVDRFYPKRGDENEKCSDTPDLSDWIGFLKRLKNPEETIPIALVGKYVEHQDAYKSITESFILAGVPDEVQVEVKYVPSEDLSPDTVESQLGDVAGVLVAPGFGDRGVEGKILAAQYAREHDVPFFGICLGLQCAIVEFARHVCGWDGAHSTEFDEDTAYPVIDLMEEQKEISDKGGTMRLGQYDCRIQDGSRAHEIYEADMVQERHRHRYEVNNVLRYKLLEEGMRFSGVNPDTDLVEIMELPDKRWFLGVQFHPEYRTTVGDPHPLFRSFVRACTAYAHEEDLVTSPQPPERKAVPLASVDM</sequence>
<comment type="function">
    <text evidence="1">Catalyzes the ATP-dependent amination of UTP to CTP with either L-glutamine or ammonia as the source of nitrogen. Regulates intracellular CTP levels through interactions with the four ribonucleotide triphosphates.</text>
</comment>
<comment type="catalytic activity">
    <reaction evidence="1">
        <text>UTP + L-glutamine + ATP + H2O = CTP + L-glutamate + ADP + phosphate + 2 H(+)</text>
        <dbReference type="Rhea" id="RHEA:26426"/>
        <dbReference type="ChEBI" id="CHEBI:15377"/>
        <dbReference type="ChEBI" id="CHEBI:15378"/>
        <dbReference type="ChEBI" id="CHEBI:29985"/>
        <dbReference type="ChEBI" id="CHEBI:30616"/>
        <dbReference type="ChEBI" id="CHEBI:37563"/>
        <dbReference type="ChEBI" id="CHEBI:43474"/>
        <dbReference type="ChEBI" id="CHEBI:46398"/>
        <dbReference type="ChEBI" id="CHEBI:58359"/>
        <dbReference type="ChEBI" id="CHEBI:456216"/>
        <dbReference type="EC" id="6.3.4.2"/>
    </reaction>
</comment>
<comment type="catalytic activity">
    <reaction evidence="1">
        <text>L-glutamine + H2O = L-glutamate + NH4(+)</text>
        <dbReference type="Rhea" id="RHEA:15889"/>
        <dbReference type="ChEBI" id="CHEBI:15377"/>
        <dbReference type="ChEBI" id="CHEBI:28938"/>
        <dbReference type="ChEBI" id="CHEBI:29985"/>
        <dbReference type="ChEBI" id="CHEBI:58359"/>
    </reaction>
</comment>
<comment type="catalytic activity">
    <reaction evidence="1">
        <text>UTP + NH4(+) + ATP = CTP + ADP + phosphate + 2 H(+)</text>
        <dbReference type="Rhea" id="RHEA:16597"/>
        <dbReference type="ChEBI" id="CHEBI:15378"/>
        <dbReference type="ChEBI" id="CHEBI:28938"/>
        <dbReference type="ChEBI" id="CHEBI:30616"/>
        <dbReference type="ChEBI" id="CHEBI:37563"/>
        <dbReference type="ChEBI" id="CHEBI:43474"/>
        <dbReference type="ChEBI" id="CHEBI:46398"/>
        <dbReference type="ChEBI" id="CHEBI:456216"/>
    </reaction>
</comment>
<comment type="activity regulation">
    <text evidence="1">Allosterically activated by GTP, when glutamine is the substrate; GTP has no effect on the reaction when ammonia is the substrate. The allosteric effector GTP functions by stabilizing the protein conformation that binds the tetrahedral intermediate(s) formed during glutamine hydrolysis. Inhibited by the product CTP, via allosteric rather than competitive inhibition.</text>
</comment>
<comment type="pathway">
    <text evidence="1">Pyrimidine metabolism; CTP biosynthesis via de novo pathway; CTP from UDP: step 2/2.</text>
</comment>
<comment type="subunit">
    <text evidence="1">Homotetramer.</text>
</comment>
<comment type="miscellaneous">
    <text evidence="1">CTPSs have evolved a hybrid strategy for distinguishing between UTP and CTP. The overlapping regions of the product feedback inhibitory and substrate sites recognize a common feature in both compounds, the triphosphate moiety. To differentiate isosteric substrate and product pyrimidine rings, an additional pocket far from the expected kinase/ligase catalytic site, specifically recognizes the cytosine and ribose portions of the product inhibitor.</text>
</comment>
<comment type="similarity">
    <text evidence="1">Belongs to the CTP synthase family.</text>
</comment>
<proteinExistence type="inferred from homology"/>
<name>PYRG_SALRD</name>